<sequence length="33" mass="3943">LTCLNCPEMFCGKFQICRNGEKICFKKLHQRRP</sequence>
<dbReference type="SMR" id="C0HJW9"/>
<dbReference type="GO" id="GO:0005576">
    <property type="term" value="C:extracellular region"/>
    <property type="evidence" value="ECO:0007669"/>
    <property type="project" value="UniProtKB-SubCell"/>
</dbReference>
<dbReference type="GO" id="GO:0015459">
    <property type="term" value="F:potassium channel regulator activity"/>
    <property type="evidence" value="ECO:0007669"/>
    <property type="project" value="UniProtKB-KW"/>
</dbReference>
<dbReference type="GO" id="GO:0090729">
    <property type="term" value="F:toxin activity"/>
    <property type="evidence" value="ECO:0007669"/>
    <property type="project" value="UniProtKB-KW"/>
</dbReference>
<dbReference type="Gene3D" id="2.10.60.10">
    <property type="entry name" value="CD59"/>
    <property type="match status" value="1"/>
</dbReference>
<dbReference type="InterPro" id="IPR045860">
    <property type="entry name" value="Snake_toxin-like_sf"/>
</dbReference>
<dbReference type="SUPFAM" id="SSF57302">
    <property type="entry name" value="Snake toxin-like"/>
    <property type="match status" value="1"/>
</dbReference>
<proteinExistence type="evidence at protein level"/>
<accession>C0HJW9</accession>
<comment type="function">
    <text evidence="2">Possible voltage-gated potassium channel (Kv) blocker. Decreases amplitude of compound action potential and conduction velocity in toad sciatic nerve. Has only mild anticoagulant activity even at a concentration of 5ug/ml. Shows no cytotoxicity towards human cell lines.</text>
</comment>
<comment type="subcellular location">
    <subcellularLocation>
        <location evidence="2">Secreted</location>
    </subcellularLocation>
</comment>
<comment type="tissue specificity">
    <text evidence="4">Expressed by the venom gland.</text>
</comment>
<comment type="mass spectrometry" mass="7579.5" error="0.591" method="Electrospray" evidence="2"/>
<comment type="similarity">
    <text evidence="3">Belongs to the three-finger toxin family. Ancestral subfamily. Orphan group II sub-subfamily.</text>
</comment>
<feature type="chain" id="PRO_0000435389" description="Neurotoxin Nk-3FTx" evidence="2">
    <location>
        <begin position="1"/>
        <end position="33" status="greater than"/>
    </location>
</feature>
<feature type="disulfide bond" evidence="1">
    <location>
        <begin position="3"/>
        <end position="24"/>
    </location>
</feature>
<feature type="disulfide bond" evidence="1">
    <location>
        <begin position="6"/>
        <end position="11"/>
    </location>
</feature>
<feature type="disulfide bond" evidence="1">
    <location>
        <begin position="17"/>
        <end status="unknown"/>
    </location>
</feature>
<feature type="unsure residue" evidence="4">
    <location>
        <position position="3"/>
    </location>
</feature>
<feature type="unsure residue" evidence="4">
    <location>
        <position position="6"/>
    </location>
</feature>
<feature type="unsure residue" evidence="4">
    <location>
        <position position="11"/>
    </location>
</feature>
<feature type="unsure residue" evidence="4">
    <location>
        <position position="17"/>
    </location>
</feature>
<feature type="unsure residue" evidence="4">
    <location>
        <position position="24"/>
    </location>
</feature>
<feature type="non-terminal residue" evidence="2">
    <location>
        <position position="33"/>
    </location>
</feature>
<reference key="1">
    <citation type="journal article" date="2016" name="J. Biochem. Mol. Toxicol.">
        <title>Purification and characterization of Nk-3FTx: a three finger toxin from the venom of North East Indian monocled cobra.</title>
        <authorList>
            <person name="Das D."/>
            <person name="Sharma M."/>
            <person name="Kumar Das H."/>
            <person name="Pratim Sahu P."/>
            <person name="Doley R."/>
        </authorList>
    </citation>
    <scope>PROTEIN SEQUENCE</scope>
    <scope>FUNCTION</scope>
    <scope>SUBCELLULAR LOCATION</scope>
    <scope>MASS SPECTROMETRY</scope>
    <source>
        <tissue>Venom</tissue>
    </source>
</reference>
<name>3NO21_NAJKA</name>
<protein>
    <recommendedName>
        <fullName>Neurotoxin Nk-3FTx</fullName>
    </recommendedName>
</protein>
<keyword id="KW-1203">Blood coagulation cascade inhibiting toxin</keyword>
<keyword id="KW-0903">Direct protein sequencing</keyword>
<keyword id="KW-1015">Disulfide bond</keyword>
<keyword id="KW-1199">Hemostasis impairing toxin</keyword>
<keyword id="KW-0872">Ion channel impairing toxin</keyword>
<keyword id="KW-0528">Neurotoxin</keyword>
<keyword id="KW-0632">Potassium channel impairing toxin</keyword>
<keyword id="KW-0964">Secreted</keyword>
<keyword id="KW-0800">Toxin</keyword>
<keyword id="KW-1220">Voltage-gated potassium channel impairing toxin</keyword>
<evidence type="ECO:0000250" key="1">
    <source>
        <dbReference type="UniProtKB" id="P81782"/>
    </source>
</evidence>
<evidence type="ECO:0000269" key="2">
    <source>
    </source>
</evidence>
<evidence type="ECO:0000305" key="3"/>
<evidence type="ECO:0000305" key="4">
    <source>
    </source>
</evidence>
<organism>
    <name type="scientific">Naja kaouthia</name>
    <name type="common">Monocled cobra</name>
    <name type="synonym">Naja siamensis</name>
    <dbReference type="NCBI Taxonomy" id="8649"/>
    <lineage>
        <taxon>Eukaryota</taxon>
        <taxon>Metazoa</taxon>
        <taxon>Chordata</taxon>
        <taxon>Craniata</taxon>
        <taxon>Vertebrata</taxon>
        <taxon>Euteleostomi</taxon>
        <taxon>Lepidosauria</taxon>
        <taxon>Squamata</taxon>
        <taxon>Bifurcata</taxon>
        <taxon>Unidentata</taxon>
        <taxon>Episquamata</taxon>
        <taxon>Toxicofera</taxon>
        <taxon>Serpentes</taxon>
        <taxon>Colubroidea</taxon>
        <taxon>Elapidae</taxon>
        <taxon>Elapinae</taxon>
        <taxon>Naja</taxon>
    </lineage>
</organism>